<proteinExistence type="inferred from homology"/>
<gene>
    <name evidence="1" type="primary">rplU</name>
    <name type="ordered locus">Arth_2391</name>
</gene>
<accession>A0JXK0</accession>
<sequence>MVYAIVRAGGRQEKVSVGDFVTLNRVPGGAGSTIELPALLLVDGDKVTSAAADLAKVTVTAEILQDLRGPKIVIQKFKNKTGYKKRQGHRQELTKVKITGIK</sequence>
<organism>
    <name type="scientific">Arthrobacter sp. (strain FB24)</name>
    <dbReference type="NCBI Taxonomy" id="290399"/>
    <lineage>
        <taxon>Bacteria</taxon>
        <taxon>Bacillati</taxon>
        <taxon>Actinomycetota</taxon>
        <taxon>Actinomycetes</taxon>
        <taxon>Micrococcales</taxon>
        <taxon>Micrococcaceae</taxon>
        <taxon>Arthrobacter</taxon>
    </lineage>
</organism>
<name>RL21_ARTS2</name>
<protein>
    <recommendedName>
        <fullName evidence="1">Large ribosomal subunit protein bL21</fullName>
    </recommendedName>
    <alternativeName>
        <fullName evidence="2">50S ribosomal protein L21</fullName>
    </alternativeName>
</protein>
<evidence type="ECO:0000255" key="1">
    <source>
        <dbReference type="HAMAP-Rule" id="MF_01363"/>
    </source>
</evidence>
<evidence type="ECO:0000305" key="2"/>
<reference key="1">
    <citation type="journal article" date="2013" name="Stand. Genomic Sci.">
        <title>Complete genome sequence of Arthrobacter sp. strain FB24.</title>
        <authorList>
            <person name="Nakatsu C.H."/>
            <person name="Barabote R."/>
            <person name="Thompson S."/>
            <person name="Bruce D."/>
            <person name="Detter C."/>
            <person name="Brettin T."/>
            <person name="Han C."/>
            <person name="Beasley F."/>
            <person name="Chen W."/>
            <person name="Konopka A."/>
            <person name="Xie G."/>
        </authorList>
    </citation>
    <scope>NUCLEOTIDE SEQUENCE [LARGE SCALE GENOMIC DNA]</scope>
    <source>
        <strain>FB24</strain>
    </source>
</reference>
<feature type="chain" id="PRO_1000067800" description="Large ribosomal subunit protein bL21">
    <location>
        <begin position="1"/>
        <end position="102"/>
    </location>
</feature>
<dbReference type="EMBL" id="CP000454">
    <property type="protein sequence ID" value="ABK03770.1"/>
    <property type="molecule type" value="Genomic_DNA"/>
</dbReference>
<dbReference type="RefSeq" id="WP_011692233.1">
    <property type="nucleotide sequence ID" value="NC_008541.1"/>
</dbReference>
<dbReference type="SMR" id="A0JXK0"/>
<dbReference type="STRING" id="290399.Arth_2391"/>
<dbReference type="KEGG" id="art:Arth_2391"/>
<dbReference type="eggNOG" id="COG0261">
    <property type="taxonomic scope" value="Bacteria"/>
</dbReference>
<dbReference type="HOGENOM" id="CLU_061463_3_0_11"/>
<dbReference type="OrthoDB" id="9813334at2"/>
<dbReference type="Proteomes" id="UP000000754">
    <property type="component" value="Chromosome"/>
</dbReference>
<dbReference type="GO" id="GO:0005737">
    <property type="term" value="C:cytoplasm"/>
    <property type="evidence" value="ECO:0007669"/>
    <property type="project" value="UniProtKB-ARBA"/>
</dbReference>
<dbReference type="GO" id="GO:1990904">
    <property type="term" value="C:ribonucleoprotein complex"/>
    <property type="evidence" value="ECO:0007669"/>
    <property type="project" value="UniProtKB-KW"/>
</dbReference>
<dbReference type="GO" id="GO:0005840">
    <property type="term" value="C:ribosome"/>
    <property type="evidence" value="ECO:0007669"/>
    <property type="project" value="UniProtKB-KW"/>
</dbReference>
<dbReference type="GO" id="GO:0019843">
    <property type="term" value="F:rRNA binding"/>
    <property type="evidence" value="ECO:0007669"/>
    <property type="project" value="UniProtKB-UniRule"/>
</dbReference>
<dbReference type="GO" id="GO:0003735">
    <property type="term" value="F:structural constituent of ribosome"/>
    <property type="evidence" value="ECO:0007669"/>
    <property type="project" value="InterPro"/>
</dbReference>
<dbReference type="GO" id="GO:0006412">
    <property type="term" value="P:translation"/>
    <property type="evidence" value="ECO:0007669"/>
    <property type="project" value="UniProtKB-UniRule"/>
</dbReference>
<dbReference type="HAMAP" id="MF_01363">
    <property type="entry name" value="Ribosomal_bL21"/>
    <property type="match status" value="1"/>
</dbReference>
<dbReference type="InterPro" id="IPR028909">
    <property type="entry name" value="bL21-like"/>
</dbReference>
<dbReference type="InterPro" id="IPR036164">
    <property type="entry name" value="bL21-like_sf"/>
</dbReference>
<dbReference type="InterPro" id="IPR001787">
    <property type="entry name" value="Ribosomal_bL21"/>
</dbReference>
<dbReference type="InterPro" id="IPR018258">
    <property type="entry name" value="Ribosomal_bL21_CS"/>
</dbReference>
<dbReference type="NCBIfam" id="TIGR00061">
    <property type="entry name" value="L21"/>
    <property type="match status" value="1"/>
</dbReference>
<dbReference type="PANTHER" id="PTHR21349">
    <property type="entry name" value="50S RIBOSOMAL PROTEIN L21"/>
    <property type="match status" value="1"/>
</dbReference>
<dbReference type="PANTHER" id="PTHR21349:SF0">
    <property type="entry name" value="LARGE RIBOSOMAL SUBUNIT PROTEIN BL21M"/>
    <property type="match status" value="1"/>
</dbReference>
<dbReference type="Pfam" id="PF00829">
    <property type="entry name" value="Ribosomal_L21p"/>
    <property type="match status" value="1"/>
</dbReference>
<dbReference type="SUPFAM" id="SSF141091">
    <property type="entry name" value="L21p-like"/>
    <property type="match status" value="1"/>
</dbReference>
<dbReference type="PROSITE" id="PS01169">
    <property type="entry name" value="RIBOSOMAL_L21"/>
    <property type="match status" value="1"/>
</dbReference>
<keyword id="KW-1185">Reference proteome</keyword>
<keyword id="KW-0687">Ribonucleoprotein</keyword>
<keyword id="KW-0689">Ribosomal protein</keyword>
<keyword id="KW-0694">RNA-binding</keyword>
<keyword id="KW-0699">rRNA-binding</keyword>
<comment type="function">
    <text evidence="1">This protein binds to 23S rRNA in the presence of protein L20.</text>
</comment>
<comment type="subunit">
    <text evidence="1">Part of the 50S ribosomal subunit. Contacts protein L20.</text>
</comment>
<comment type="similarity">
    <text evidence="1">Belongs to the bacterial ribosomal protein bL21 family.</text>
</comment>